<evidence type="ECO:0000255" key="1">
    <source>
        <dbReference type="HAMAP-Rule" id="MF_01031"/>
    </source>
</evidence>
<name>LEUD_BACC0</name>
<sequence>MEPFRIHKGTAAVLMNDNIDTDQIIPKQYLKRIERTGFGKFLFDEWRYDNERHENPNFPLNSPDRKGASILITGNNFGCGSSREHAPWALADYGFRVIIAGGFADIFYMNCMKNGMLPIVMDKEMREKLVKTDAREQIEVDLENEVITTSTHRFHFTIEKMWKEKLLNGLDEISITMQYEQEIKEYERRVAAY</sequence>
<keyword id="KW-0028">Amino-acid biosynthesis</keyword>
<keyword id="KW-0100">Branched-chain amino acid biosynthesis</keyword>
<keyword id="KW-0432">Leucine biosynthesis</keyword>
<keyword id="KW-0456">Lyase</keyword>
<reference key="1">
    <citation type="submission" date="2008-10" db="EMBL/GenBank/DDBJ databases">
        <title>Genome sequence of Bacillus cereus AH820.</title>
        <authorList>
            <person name="Dodson R.J."/>
            <person name="Durkin A.S."/>
            <person name="Rosovitz M.J."/>
            <person name="Rasko D.A."/>
            <person name="Hoffmaster A."/>
            <person name="Ravel J."/>
            <person name="Sutton G."/>
        </authorList>
    </citation>
    <scope>NUCLEOTIDE SEQUENCE [LARGE SCALE GENOMIC DNA]</scope>
    <source>
        <strain>AH820</strain>
    </source>
</reference>
<proteinExistence type="inferred from homology"/>
<accession>B7JFY8</accession>
<protein>
    <recommendedName>
        <fullName evidence="1">3-isopropylmalate dehydratase small subunit</fullName>
        <ecNumber evidence="1">4.2.1.33</ecNumber>
    </recommendedName>
    <alternativeName>
        <fullName evidence="1">Alpha-IPM isomerase</fullName>
        <shortName evidence="1">IPMI</shortName>
    </alternativeName>
    <alternativeName>
        <fullName evidence="1">Isopropylmalate isomerase</fullName>
    </alternativeName>
</protein>
<comment type="function">
    <text evidence="1">Catalyzes the isomerization between 2-isopropylmalate and 3-isopropylmalate, via the formation of 2-isopropylmaleate.</text>
</comment>
<comment type="catalytic activity">
    <reaction evidence="1">
        <text>(2R,3S)-3-isopropylmalate = (2S)-2-isopropylmalate</text>
        <dbReference type="Rhea" id="RHEA:32287"/>
        <dbReference type="ChEBI" id="CHEBI:1178"/>
        <dbReference type="ChEBI" id="CHEBI:35121"/>
        <dbReference type="EC" id="4.2.1.33"/>
    </reaction>
</comment>
<comment type="pathway">
    <text evidence="1">Amino-acid biosynthesis; L-leucine biosynthesis; L-leucine from 3-methyl-2-oxobutanoate: step 2/4.</text>
</comment>
<comment type="subunit">
    <text evidence="1">Heterodimer of LeuC and LeuD.</text>
</comment>
<comment type="similarity">
    <text evidence="1">Belongs to the LeuD family. LeuD type 1 subfamily.</text>
</comment>
<gene>
    <name evidence="1" type="primary">leuD</name>
    <name type="ordered locus">BCAH820_1494</name>
</gene>
<organism>
    <name type="scientific">Bacillus cereus (strain AH820)</name>
    <dbReference type="NCBI Taxonomy" id="405535"/>
    <lineage>
        <taxon>Bacteria</taxon>
        <taxon>Bacillati</taxon>
        <taxon>Bacillota</taxon>
        <taxon>Bacilli</taxon>
        <taxon>Bacillales</taxon>
        <taxon>Bacillaceae</taxon>
        <taxon>Bacillus</taxon>
        <taxon>Bacillus cereus group</taxon>
    </lineage>
</organism>
<feature type="chain" id="PRO_1000135789" description="3-isopropylmalate dehydratase small subunit">
    <location>
        <begin position="1"/>
        <end position="193"/>
    </location>
</feature>
<dbReference type="EC" id="4.2.1.33" evidence="1"/>
<dbReference type="EMBL" id="CP001283">
    <property type="protein sequence ID" value="ACK92174.1"/>
    <property type="molecule type" value="Genomic_DNA"/>
</dbReference>
<dbReference type="RefSeq" id="WP_000433177.1">
    <property type="nucleotide sequence ID" value="NC_011773.1"/>
</dbReference>
<dbReference type="SMR" id="B7JFY8"/>
<dbReference type="KEGG" id="bcu:BCAH820_1494"/>
<dbReference type="HOGENOM" id="CLU_081378_0_3_9"/>
<dbReference type="UniPathway" id="UPA00048">
    <property type="reaction ID" value="UER00071"/>
</dbReference>
<dbReference type="Proteomes" id="UP000001363">
    <property type="component" value="Chromosome"/>
</dbReference>
<dbReference type="GO" id="GO:0009316">
    <property type="term" value="C:3-isopropylmalate dehydratase complex"/>
    <property type="evidence" value="ECO:0007669"/>
    <property type="project" value="InterPro"/>
</dbReference>
<dbReference type="GO" id="GO:0003861">
    <property type="term" value="F:3-isopropylmalate dehydratase activity"/>
    <property type="evidence" value="ECO:0007669"/>
    <property type="project" value="UniProtKB-UniRule"/>
</dbReference>
<dbReference type="GO" id="GO:0009098">
    <property type="term" value="P:L-leucine biosynthetic process"/>
    <property type="evidence" value="ECO:0007669"/>
    <property type="project" value="UniProtKB-UniRule"/>
</dbReference>
<dbReference type="CDD" id="cd01577">
    <property type="entry name" value="IPMI_Swivel"/>
    <property type="match status" value="1"/>
</dbReference>
<dbReference type="FunFam" id="3.20.19.10:FF:000003">
    <property type="entry name" value="3-isopropylmalate dehydratase small subunit"/>
    <property type="match status" value="1"/>
</dbReference>
<dbReference type="Gene3D" id="3.20.19.10">
    <property type="entry name" value="Aconitase, domain 4"/>
    <property type="match status" value="1"/>
</dbReference>
<dbReference type="HAMAP" id="MF_01031">
    <property type="entry name" value="LeuD_type1"/>
    <property type="match status" value="1"/>
</dbReference>
<dbReference type="InterPro" id="IPR004431">
    <property type="entry name" value="3-IsopropMal_deHydase_ssu"/>
</dbReference>
<dbReference type="InterPro" id="IPR015928">
    <property type="entry name" value="Aconitase/3IPM_dehydase_swvl"/>
</dbReference>
<dbReference type="InterPro" id="IPR000573">
    <property type="entry name" value="AconitaseA/IPMdHydase_ssu_swvl"/>
</dbReference>
<dbReference type="InterPro" id="IPR033940">
    <property type="entry name" value="IPMI_Swivel"/>
</dbReference>
<dbReference type="InterPro" id="IPR050075">
    <property type="entry name" value="LeuD"/>
</dbReference>
<dbReference type="NCBIfam" id="TIGR00171">
    <property type="entry name" value="leuD"/>
    <property type="match status" value="1"/>
</dbReference>
<dbReference type="NCBIfam" id="NF002458">
    <property type="entry name" value="PRK01641.1"/>
    <property type="match status" value="1"/>
</dbReference>
<dbReference type="PANTHER" id="PTHR43345:SF5">
    <property type="entry name" value="3-ISOPROPYLMALATE DEHYDRATASE SMALL SUBUNIT"/>
    <property type="match status" value="1"/>
</dbReference>
<dbReference type="PANTHER" id="PTHR43345">
    <property type="entry name" value="3-ISOPROPYLMALATE DEHYDRATASE SMALL SUBUNIT 2-RELATED-RELATED"/>
    <property type="match status" value="1"/>
</dbReference>
<dbReference type="Pfam" id="PF00694">
    <property type="entry name" value="Aconitase_C"/>
    <property type="match status" value="1"/>
</dbReference>
<dbReference type="SUPFAM" id="SSF52016">
    <property type="entry name" value="LeuD/IlvD-like"/>
    <property type="match status" value="1"/>
</dbReference>